<accession>Q9HHS9</accession>
<accession>P33965</accession>
<keyword id="KW-0067">ATP-binding</keyword>
<keyword id="KW-0963">Cytoplasm</keyword>
<keyword id="KW-0304">Gas vesicle</keyword>
<keyword id="KW-0378">Hydrolase</keyword>
<keyword id="KW-0547">Nucleotide-binding</keyword>
<keyword id="KW-0614">Plasmid</keyword>
<keyword id="KW-1185">Reference proteome</keyword>
<gene>
    <name evidence="11" type="primary">gvpN2</name>
    <name evidence="9" type="synonym">c-gvpN</name>
    <name evidence="11" type="ordered locus">VNG_6244G</name>
</gene>
<proteinExistence type="evidence at protein level"/>
<feature type="chain" id="PRO_0000219568" description="Gas vesicle ATPase GvpN2">
    <location>
        <begin position="1"/>
        <end position="344"/>
    </location>
</feature>
<feature type="region of interest" description="Disordered" evidence="4">
    <location>
        <begin position="1"/>
        <end position="55"/>
    </location>
</feature>
<feature type="compositionally biased region" description="Basic residues" evidence="4">
    <location>
        <begin position="7"/>
        <end position="17"/>
    </location>
</feature>
<feature type="compositionally biased region" description="Basic and acidic residues" evidence="4">
    <location>
        <begin position="18"/>
        <end position="52"/>
    </location>
</feature>
<feature type="binding site" evidence="3">
    <location>
        <begin position="89"/>
        <end position="96"/>
    </location>
    <ligand>
        <name>ATP</name>
        <dbReference type="ChEBI" id="CHEBI:30616"/>
    </ligand>
</feature>
<feature type="sequence conflict" description="In Ref. 1; CAA45994 and 2; CAA64341." evidence="10" ref="1 2">
    <original>SDVEA</original>
    <variation>KPSRP</variation>
    <location>
        <begin position="323"/>
        <end position="327"/>
    </location>
</feature>
<feature type="sequence conflict" description="In Ref. 1; CAA45994 and 2; CAA64341." evidence="10" ref="1 2">
    <original>LA</original>
    <variation>AGP</variation>
    <location>
        <begin position="336"/>
        <end position="337"/>
    </location>
</feature>
<reference evidence="12" key="1">
    <citation type="journal article" date="1992" name="J. Mol. Biol.">
        <title>Three different but related gene clusters encoding gas vesicles in halophilic archaea.</title>
        <authorList>
            <person name="Englert C."/>
            <person name="Krueger K."/>
            <person name="Offner S."/>
            <person name="Pfeifer F."/>
        </authorList>
    </citation>
    <scope>NUCLEOTIDE SEQUENCE [GENOMIC DNA]</scope>
    <scope>GAS VESICLE GENE CLUSTER</scope>
    <source>
        <strain>NRC-817</strain>
    </source>
</reference>
<reference evidence="13" key="2">
    <citation type="journal article" date="1996" name="J. Bacteriol.">
        <title>Transcript analysis of the c-vac region and differential synthesis of the two regulatory gas vesicle proteins GvpD and GvpE in Halobacterium salinarium PHH4.</title>
        <authorList>
            <person name="Krueger K."/>
            <person name="Pfeifer F."/>
        </authorList>
    </citation>
    <scope>NUCLEOTIDE SEQUENCE [GENOMIC DNA]</scope>
    <scope>INDUCTION</scope>
    <source>
        <strain>PHH1 /PHH4</strain>
    </source>
</reference>
<reference evidence="11" key="3">
    <citation type="journal article" date="2000" name="Proc. Natl. Acad. Sci. U.S.A.">
        <title>Genome sequence of Halobacterium species NRC-1.</title>
        <authorList>
            <person name="Ng W.V."/>
            <person name="Kennedy S.P."/>
            <person name="Mahairas G.G."/>
            <person name="Berquist B."/>
            <person name="Pan M."/>
            <person name="Shukla H.D."/>
            <person name="Lasky S.R."/>
            <person name="Baliga N.S."/>
            <person name="Thorsson V."/>
            <person name="Sbrogna J."/>
            <person name="Swartzell S."/>
            <person name="Weir D."/>
            <person name="Hall J."/>
            <person name="Dahl T.A."/>
            <person name="Welti R."/>
            <person name="Goo Y.A."/>
            <person name="Leithauser B."/>
            <person name="Keller K."/>
            <person name="Cruz R."/>
            <person name="Danson M.J."/>
            <person name="Hough D.W."/>
            <person name="Maddocks D.G."/>
            <person name="Jablonski P.E."/>
            <person name="Krebs M.P."/>
            <person name="Angevine C.M."/>
            <person name="Dale H."/>
            <person name="Isenbarger T.A."/>
            <person name="Peck R.F."/>
            <person name="Pohlschroder M."/>
            <person name="Spudich J.L."/>
            <person name="Jung K.-H."/>
            <person name="Alam M."/>
            <person name="Freitas T."/>
            <person name="Hou S."/>
            <person name="Daniels C.J."/>
            <person name="Dennis P.P."/>
            <person name="Omer A.D."/>
            <person name="Ebhardt H."/>
            <person name="Lowe T.M."/>
            <person name="Liang P."/>
            <person name="Riley M."/>
            <person name="Hood L."/>
            <person name="DasSarma S."/>
        </authorList>
    </citation>
    <scope>NUCLEOTIDE SEQUENCE [LARGE SCALE GENOMIC DNA]</scope>
    <source>
        <strain>ATCC 700922 / JCM 11081 / NRC-1</strain>
        <plasmid>pNRC200</plasmid>
    </source>
</reference>
<reference key="4">
    <citation type="journal article" date="1997" name="Microbiology">
        <title>Growth competition between Halobacterium salinarium strain PHH1 and mutants affected in gas vesicle synthesis.</title>
        <authorList>
            <person name="Beard S.J."/>
            <person name="Hayes P.K."/>
            <person name="Walsby A.E."/>
        </authorList>
    </citation>
    <scope>FUNCTION IN BUOYANCY</scope>
    <scope>POSSIBLE INDUCTION BY OXYGEN LIMITATION</scope>
    <source>
        <strain>PHH1</strain>
    </source>
</reference>
<reference key="5">
    <citation type="journal article" date="1998" name="Microbiology">
        <title>Structural characteristics of halobacterial gas vesicles.</title>
        <authorList>
            <person name="Offner S."/>
            <person name="Ziese U."/>
            <person name="Wanner G."/>
            <person name="Typke D."/>
            <person name="Pfeifer F."/>
        </authorList>
    </citation>
    <scope>FUNCTION</scope>
    <source>
        <strain>PHH1</strain>
    </source>
</reference>
<evidence type="ECO:0000250" key="1">
    <source>
        <dbReference type="UniProtKB" id="Q8YUT0"/>
    </source>
</evidence>
<evidence type="ECO:0000250" key="2">
    <source>
        <dbReference type="UniProtKB" id="Q9HI16"/>
    </source>
</evidence>
<evidence type="ECO:0000255" key="3"/>
<evidence type="ECO:0000256" key="4">
    <source>
        <dbReference type="SAM" id="MobiDB-lite"/>
    </source>
</evidence>
<evidence type="ECO:0000269" key="5">
    <source>
    </source>
</evidence>
<evidence type="ECO:0000269" key="6">
    <source>
    </source>
</evidence>
<evidence type="ECO:0000269" key="7">
    <source>
    </source>
</evidence>
<evidence type="ECO:0000269" key="8">
    <source>
    </source>
</evidence>
<evidence type="ECO:0000303" key="9">
    <source>
    </source>
</evidence>
<evidence type="ECO:0000305" key="10"/>
<evidence type="ECO:0000312" key="11">
    <source>
        <dbReference type="EMBL" id="AAG20897.1"/>
    </source>
</evidence>
<evidence type="ECO:0000312" key="12">
    <source>
        <dbReference type="EMBL" id="CAA45994.1"/>
    </source>
</evidence>
<evidence type="ECO:0000312" key="13">
    <source>
        <dbReference type="EMBL" id="CAA64341.1"/>
    </source>
</evidence>
<sequence length="344" mass="38077">MTDTSRNRKVRGSKIRSSRSDKRQSRGSEDKELKRLADARDTDSEQAGDRVGDAFIPDEQSFIETDAVARVTDRMRRWLSVDRPVHLIGPTGCGKTAVAMHVARTRDRPVVWVNGDADLTTSDLVGEYAETERISEHDQFIHNVVKRKDIVRDRWVDNPLTLAVQEGATLVYNEFSRTKPVANNVLLSVFEEGVLELPGKRGASRYVDVHPAFRTILTSNSVEYAGVHEPQDALLDRLVGLHMDFYDAETETAIVRAHVEAADVPVAAIVGMMRELRERLEITVGTRAAIMAAEGLTAADDPDADTVVDVCTDVLASKVSQRSDVEALRDVIEETLADRGVTLS</sequence>
<geneLocation type="plasmid">
    <name>pNRC200</name>
</geneLocation>
<name>GVPN2_HALSA</name>
<dbReference type="EC" id="3.6.4.-" evidence="1"/>
<dbReference type="EMBL" id="X64730">
    <property type="protein sequence ID" value="CAA45994.1"/>
    <property type="molecule type" value="Genomic_DNA"/>
</dbReference>
<dbReference type="EMBL" id="X94688">
    <property type="protein sequence ID" value="CAA64341.1"/>
    <property type="molecule type" value="Genomic_DNA"/>
</dbReference>
<dbReference type="EMBL" id="AE004438">
    <property type="protein sequence ID" value="AAG20897.1"/>
    <property type="molecule type" value="Genomic_DNA"/>
</dbReference>
<dbReference type="SMR" id="Q9HHS9"/>
<dbReference type="KEGG" id="hal:VNG_6244G"/>
<dbReference type="PATRIC" id="fig|64091.14.peg.2245"/>
<dbReference type="HOGENOM" id="CLU_051123_0_0_2"/>
<dbReference type="InParanoid" id="Q9HHS9"/>
<dbReference type="OrthoDB" id="45425at2157"/>
<dbReference type="PhylomeDB" id="Q9HHS9"/>
<dbReference type="Proteomes" id="UP000000554">
    <property type="component" value="Plasmid pNRC200"/>
</dbReference>
<dbReference type="GO" id="GO:0005737">
    <property type="term" value="C:cytoplasm"/>
    <property type="evidence" value="ECO:0007669"/>
    <property type="project" value="UniProtKB-SubCell"/>
</dbReference>
<dbReference type="GO" id="GO:0031411">
    <property type="term" value="C:gas vesicle"/>
    <property type="evidence" value="ECO:0007669"/>
    <property type="project" value="UniProtKB-SubCell"/>
</dbReference>
<dbReference type="GO" id="GO:0005524">
    <property type="term" value="F:ATP binding"/>
    <property type="evidence" value="ECO:0007669"/>
    <property type="project" value="UniProtKB-KW"/>
</dbReference>
<dbReference type="GO" id="GO:0016887">
    <property type="term" value="F:ATP hydrolysis activity"/>
    <property type="evidence" value="ECO:0007669"/>
    <property type="project" value="InterPro"/>
</dbReference>
<dbReference type="GO" id="GO:0031412">
    <property type="term" value="P:gas vesicle organization"/>
    <property type="evidence" value="ECO:0007669"/>
    <property type="project" value="InterPro"/>
</dbReference>
<dbReference type="CDD" id="cd00009">
    <property type="entry name" value="AAA"/>
    <property type="match status" value="1"/>
</dbReference>
<dbReference type="Gene3D" id="3.40.50.300">
    <property type="entry name" value="P-loop containing nucleotide triphosphate hydrolases"/>
    <property type="match status" value="1"/>
</dbReference>
<dbReference type="InterPro" id="IPR003593">
    <property type="entry name" value="AAA+_ATPase"/>
</dbReference>
<dbReference type="InterPro" id="IPR011704">
    <property type="entry name" value="ATPase_dyneun-rel_AAA"/>
</dbReference>
<dbReference type="InterPro" id="IPR050764">
    <property type="entry name" value="CbbQ/NirQ/NorQ/GpvN"/>
</dbReference>
<dbReference type="InterPro" id="IPR013462">
    <property type="entry name" value="Gas-vesicle_GvpN"/>
</dbReference>
<dbReference type="InterPro" id="IPR027417">
    <property type="entry name" value="P-loop_NTPase"/>
</dbReference>
<dbReference type="NCBIfam" id="TIGR02640">
    <property type="entry name" value="gas_vesic_GvpN"/>
    <property type="match status" value="1"/>
</dbReference>
<dbReference type="PANTHER" id="PTHR42759:SF1">
    <property type="entry name" value="MAGNESIUM-CHELATASE SUBUNIT CHLD"/>
    <property type="match status" value="1"/>
</dbReference>
<dbReference type="PANTHER" id="PTHR42759">
    <property type="entry name" value="MOXR FAMILY PROTEIN"/>
    <property type="match status" value="1"/>
</dbReference>
<dbReference type="Pfam" id="PF07728">
    <property type="entry name" value="AAA_5"/>
    <property type="match status" value="1"/>
</dbReference>
<dbReference type="SMART" id="SM00382">
    <property type="entry name" value="AAA"/>
    <property type="match status" value="1"/>
</dbReference>
<dbReference type="SUPFAM" id="SSF52540">
    <property type="entry name" value="P-loop containing nucleoside triphosphate hydrolases"/>
    <property type="match status" value="1"/>
</dbReference>
<protein>
    <recommendedName>
        <fullName evidence="1">Gas vesicle ATPase GvpN2</fullName>
        <ecNumber evidence="1">3.6.4.-</ecNumber>
    </recommendedName>
    <alternativeName>
        <fullName>Gas vesicle protein N2</fullName>
        <shortName>GvpN2</shortName>
    </alternativeName>
</protein>
<comment type="function">
    <text evidence="1 2 6">An ATPase that functions in gas vesicle formation (By similarity). A minor component of the gas vesicle, also found in soluble extracts (By similarity). Gas vesicles are hollow, gas filled proteinaceous nanostructures found in several microbial planktonic microorganisms. They allow positioning of halobacteria at the optimal depth for growth in the poorly aerated, shallow brine pools of their habitat (PubMed:33711860).</text>
</comment>
<comment type="function">
    <text evidence="8">Expression of 2 c-vac DNA fragments containing 2 divergently transcribed regions (gvpE-gvpF-gvpG-gvpH-gvpI-gvpJ-gvpK-gvpL-gvpM and gvpA-gvpC-gvpN-gvpO) allows H.volcanii to produce gas vesicles.</text>
</comment>
<comment type="catalytic activity">
    <reaction evidence="1">
        <text>ATP + H2O = ADP + phosphate + H(+)</text>
        <dbReference type="Rhea" id="RHEA:13065"/>
        <dbReference type="ChEBI" id="CHEBI:15377"/>
        <dbReference type="ChEBI" id="CHEBI:15378"/>
        <dbReference type="ChEBI" id="CHEBI:30616"/>
        <dbReference type="ChEBI" id="CHEBI:43474"/>
        <dbReference type="ChEBI" id="CHEBI:456216"/>
    </reaction>
</comment>
<comment type="subunit">
    <text evidence="2">Forms homodimers, a GvpN-GvpO heterodimer, interacts with GvpC and GvpL, might interact with GvpA.</text>
</comment>
<comment type="subcellular location">
    <subcellularLocation>
        <location evidence="2">Gas vesicle</location>
    </subcellularLocation>
    <subcellularLocation>
        <location evidence="2">Cytoplasm</location>
    </subcellularLocation>
</comment>
<comment type="induction">
    <text evidence="6 7">In PHH4 (a deletion of the p-vac locus) not transcribed in exponential phase, highly transcribed from stationary to mid-stationary phase. Small amounts of longer transcripts that probably include gvpC-gvpN-gvpO and further downstream are also seen (PubMed:8763925). Gas vesicles appear earlier when grown in static culture, possibly due to O(2)-limitation (PubMed:33711860).</text>
</comment>
<comment type="miscellaneous">
    <text evidence="5 7">Encoded in a 14-gene locus called c-vac which produces cylindrical gas vesicles only in the stationary growth phase.</text>
</comment>
<comment type="similarity">
    <text evidence="10">Belongs to the CbbQ/NirQ/NorQ/GpvN family.</text>
</comment>
<organism>
    <name type="scientific">Halobacterium salinarum (strain ATCC 700922 / JCM 11081 / NRC-1)</name>
    <name type="common">Halobacterium halobium</name>
    <dbReference type="NCBI Taxonomy" id="64091"/>
    <lineage>
        <taxon>Archaea</taxon>
        <taxon>Methanobacteriati</taxon>
        <taxon>Methanobacteriota</taxon>
        <taxon>Stenosarchaea group</taxon>
        <taxon>Halobacteria</taxon>
        <taxon>Halobacteriales</taxon>
        <taxon>Halobacteriaceae</taxon>
        <taxon>Halobacterium</taxon>
        <taxon>Halobacterium salinarum NRC-34001</taxon>
    </lineage>
</organism>